<proteinExistence type="evidence at protein level"/>
<comment type="subunit">
    <text evidence="2">Part of the 30S ribosomal subunit.</text>
</comment>
<comment type="similarity">
    <text evidence="1">Belongs to the eukaryotic ribosomal protein eS6 family.</text>
</comment>
<dbReference type="EMBL" id="AP006878">
    <property type="protein sequence ID" value="BAD86140.1"/>
    <property type="molecule type" value="Genomic_DNA"/>
</dbReference>
<dbReference type="RefSeq" id="WP_011250901.1">
    <property type="nucleotide sequence ID" value="NC_006624.1"/>
</dbReference>
<dbReference type="PDB" id="6SKF">
    <property type="method" value="EM"/>
    <property type="resolution" value="2.95 A"/>
    <property type="chains" value="Ah=1-125"/>
</dbReference>
<dbReference type="PDB" id="6SKG">
    <property type="method" value="EM"/>
    <property type="resolution" value="2.65 A"/>
    <property type="chains" value="Ah=1-125"/>
</dbReference>
<dbReference type="PDB" id="6TH6">
    <property type="method" value="EM"/>
    <property type="resolution" value="2.55 A"/>
    <property type="chains" value="Ah=1-125"/>
</dbReference>
<dbReference type="PDBsum" id="6SKF"/>
<dbReference type="PDBsum" id="6SKG"/>
<dbReference type="PDBsum" id="6TH6"/>
<dbReference type="EMDB" id="EMD-10223"/>
<dbReference type="EMDB" id="EMD-10224"/>
<dbReference type="EMDB" id="EMD-10503"/>
<dbReference type="SMR" id="Q5JDK8"/>
<dbReference type="FunCoup" id="Q5JDK8">
    <property type="interactions" value="125"/>
</dbReference>
<dbReference type="IntAct" id="Q5JDK8">
    <property type="interactions" value="1"/>
</dbReference>
<dbReference type="MINT" id="Q5JDK8"/>
<dbReference type="STRING" id="69014.TK1951"/>
<dbReference type="EnsemblBacteria" id="BAD86140">
    <property type="protein sequence ID" value="BAD86140"/>
    <property type="gene ID" value="TK1951"/>
</dbReference>
<dbReference type="GeneID" id="78448482"/>
<dbReference type="KEGG" id="tko:TK1951"/>
<dbReference type="PATRIC" id="fig|69014.16.peg.1905"/>
<dbReference type="eggNOG" id="arCOG01946">
    <property type="taxonomic scope" value="Archaea"/>
</dbReference>
<dbReference type="HOGENOM" id="CLU_109671_1_1_2"/>
<dbReference type="InParanoid" id="Q5JDK8"/>
<dbReference type="OrthoDB" id="7793at2157"/>
<dbReference type="PhylomeDB" id="Q5JDK8"/>
<dbReference type="Proteomes" id="UP000000536">
    <property type="component" value="Chromosome"/>
</dbReference>
<dbReference type="GO" id="GO:1990904">
    <property type="term" value="C:ribonucleoprotein complex"/>
    <property type="evidence" value="ECO:0007669"/>
    <property type="project" value="UniProtKB-KW"/>
</dbReference>
<dbReference type="GO" id="GO:0005840">
    <property type="term" value="C:ribosome"/>
    <property type="evidence" value="ECO:0007669"/>
    <property type="project" value="UniProtKB-KW"/>
</dbReference>
<dbReference type="GO" id="GO:0003735">
    <property type="term" value="F:structural constituent of ribosome"/>
    <property type="evidence" value="ECO:0007669"/>
    <property type="project" value="InterPro"/>
</dbReference>
<dbReference type="GO" id="GO:0006412">
    <property type="term" value="P:translation"/>
    <property type="evidence" value="ECO:0007669"/>
    <property type="project" value="UniProtKB-UniRule"/>
</dbReference>
<dbReference type="HAMAP" id="MF_00512">
    <property type="entry name" value="Ribosomal_eS6"/>
    <property type="match status" value="1"/>
</dbReference>
<dbReference type="InterPro" id="IPR001377">
    <property type="entry name" value="Ribosomal_eS6"/>
</dbReference>
<dbReference type="InterPro" id="IPR020924">
    <property type="entry name" value="Ribosomal_eS6_arc"/>
</dbReference>
<dbReference type="InterPro" id="IPR018282">
    <property type="entry name" value="Ribosomal_eS6_CS"/>
</dbReference>
<dbReference type="NCBIfam" id="NF003293">
    <property type="entry name" value="PRK04290.1-2"/>
    <property type="match status" value="1"/>
</dbReference>
<dbReference type="NCBIfam" id="NF003294">
    <property type="entry name" value="PRK04290.1-3"/>
    <property type="match status" value="1"/>
</dbReference>
<dbReference type="PANTHER" id="PTHR11502">
    <property type="entry name" value="40S RIBOSOMAL PROTEIN S6"/>
    <property type="match status" value="1"/>
</dbReference>
<dbReference type="Pfam" id="PF01092">
    <property type="entry name" value="Ribosomal_S6e"/>
    <property type="match status" value="1"/>
</dbReference>
<dbReference type="SMART" id="SM01405">
    <property type="entry name" value="Ribosomal_S6e"/>
    <property type="match status" value="1"/>
</dbReference>
<dbReference type="PROSITE" id="PS00578">
    <property type="entry name" value="RIBOSOMAL_S6E"/>
    <property type="match status" value="1"/>
</dbReference>
<accession>Q5JDK8</accession>
<protein>
    <recommendedName>
        <fullName evidence="1">Small ribosomal subunit protein eS6</fullName>
    </recommendedName>
    <alternativeName>
        <fullName evidence="3">30S ribosomal protein S6e</fullName>
    </alternativeName>
</protein>
<sequence length="125" mass="13737">MATFKLVISNPKNGVAKQVEISGPEADKLIGRRIGEEIPASELGLNLSEIFGEEIPADAKLKITGGTDKDGFPMRPDVHGPRRVKILLSRGPGFRPRERGERRKKTVHGNTISPNIVQVNMKIVF</sequence>
<name>RS6E_THEKO</name>
<evidence type="ECO:0000255" key="1">
    <source>
        <dbReference type="HAMAP-Rule" id="MF_00512"/>
    </source>
</evidence>
<evidence type="ECO:0000269" key="2">
    <source>
    </source>
</evidence>
<evidence type="ECO:0000305" key="3"/>
<evidence type="ECO:0007744" key="4">
    <source>
        <dbReference type="PDB" id="6SKF"/>
    </source>
</evidence>
<evidence type="ECO:0007744" key="5">
    <source>
        <dbReference type="PDB" id="6SKG"/>
    </source>
</evidence>
<evidence type="ECO:0007744" key="6">
    <source>
        <dbReference type="PDB" id="6TH6"/>
    </source>
</evidence>
<reference key="1">
    <citation type="journal article" date="2005" name="Genome Res.">
        <title>Complete genome sequence of the hyperthermophilic archaeon Thermococcus kodakaraensis KOD1 and comparison with Pyrococcus genomes.</title>
        <authorList>
            <person name="Fukui T."/>
            <person name="Atomi H."/>
            <person name="Kanai T."/>
            <person name="Matsumi R."/>
            <person name="Fujiwara S."/>
            <person name="Imanaka T."/>
        </authorList>
    </citation>
    <scope>NUCLEOTIDE SEQUENCE [LARGE SCALE GENOMIC DNA]</scope>
    <source>
        <strain>ATCC BAA-918 / JCM 12380 / KOD1</strain>
    </source>
</reference>
<reference evidence="4 5 6" key="2">
    <citation type="journal article" date="2020" name="Nature">
        <title>Dynamic RNA acetylation revealed by quantitative cross-evolutionary mapping.</title>
        <authorList>
            <person name="Sas-Chen A."/>
            <person name="Thomas J.M."/>
            <person name="Matzov D."/>
            <person name="Taoka M."/>
            <person name="Nance K.D."/>
            <person name="Nir R."/>
            <person name="Bryson K.M."/>
            <person name="Shachar R."/>
            <person name="Liman G.L.S."/>
            <person name="Burkhart B.W."/>
            <person name="Gamage S.T."/>
            <person name="Nobe Y."/>
            <person name="Briney C.A."/>
            <person name="Levy M.J."/>
            <person name="Fuchs R.T."/>
            <person name="Robb G.B."/>
            <person name="Hartmann J."/>
            <person name="Sharma S."/>
            <person name="Lin Q."/>
            <person name="Florens L."/>
            <person name="Washburn M.P."/>
            <person name="Isobe T."/>
            <person name="Santangelo T.J."/>
            <person name="Shalev-Benami M."/>
            <person name="Meier J.L."/>
            <person name="Schwartz S."/>
        </authorList>
    </citation>
    <scope>STRUCTURE BY ELECTRON MICROSCOPY (2.55 ANGSTROMS) IN 70S RIBOSOME</scope>
    <scope>SUBUNIT</scope>
    <source>
        <strain>ATCC BAA-918 / TS559</strain>
    </source>
</reference>
<feature type="chain" id="PRO_0000137359" description="Small ribosomal subunit protein eS6">
    <location>
        <begin position="1"/>
        <end position="125"/>
    </location>
</feature>
<organism>
    <name type="scientific">Thermococcus kodakarensis (strain ATCC BAA-918 / JCM 12380 / KOD1)</name>
    <name type="common">Pyrococcus kodakaraensis (strain KOD1)</name>
    <dbReference type="NCBI Taxonomy" id="69014"/>
    <lineage>
        <taxon>Archaea</taxon>
        <taxon>Methanobacteriati</taxon>
        <taxon>Methanobacteriota</taxon>
        <taxon>Thermococci</taxon>
        <taxon>Thermococcales</taxon>
        <taxon>Thermococcaceae</taxon>
        <taxon>Thermococcus</taxon>
    </lineage>
</organism>
<gene>
    <name evidence="1" type="primary">rps6e</name>
    <name type="ordered locus">TK1951</name>
</gene>
<keyword id="KW-0002">3D-structure</keyword>
<keyword id="KW-1185">Reference proteome</keyword>
<keyword id="KW-0687">Ribonucleoprotein</keyword>
<keyword id="KW-0689">Ribosomal protein</keyword>